<comment type="function">
    <text evidence="1">Aspartyl-tRNA synthetase with relaxed tRNA specificity since it is able to aspartylate not only its cognate tRNA(Asp) but also tRNA(Asn). Reaction proceeds in two steps: L-aspartate is first activated by ATP to form Asp-AMP and then transferred to the acceptor end of tRNA(Asp/Asn).</text>
</comment>
<comment type="catalytic activity">
    <reaction evidence="1">
        <text>tRNA(Asx) + L-aspartate + ATP = L-aspartyl-tRNA(Asx) + AMP + diphosphate</text>
        <dbReference type="Rhea" id="RHEA:18349"/>
        <dbReference type="Rhea" id="RHEA-COMP:9710"/>
        <dbReference type="Rhea" id="RHEA-COMP:9711"/>
        <dbReference type="ChEBI" id="CHEBI:29991"/>
        <dbReference type="ChEBI" id="CHEBI:30616"/>
        <dbReference type="ChEBI" id="CHEBI:33019"/>
        <dbReference type="ChEBI" id="CHEBI:78442"/>
        <dbReference type="ChEBI" id="CHEBI:78516"/>
        <dbReference type="ChEBI" id="CHEBI:456215"/>
        <dbReference type="EC" id="6.1.1.23"/>
    </reaction>
</comment>
<comment type="subunit">
    <text evidence="1">Homodimer.</text>
</comment>
<comment type="subcellular location">
    <subcellularLocation>
        <location evidence="1">Cytoplasm</location>
    </subcellularLocation>
</comment>
<comment type="similarity">
    <text evidence="1">Belongs to the class-II aminoacyl-tRNA synthetase family. Type 1 subfamily.</text>
</comment>
<organism>
    <name type="scientific">Bacillus cytotoxicus (strain DSM 22905 / CIP 110041 / 391-98 / NVH 391-98)</name>
    <dbReference type="NCBI Taxonomy" id="315749"/>
    <lineage>
        <taxon>Bacteria</taxon>
        <taxon>Bacillati</taxon>
        <taxon>Bacillota</taxon>
        <taxon>Bacilli</taxon>
        <taxon>Bacillales</taxon>
        <taxon>Bacillaceae</taxon>
        <taxon>Bacillus</taxon>
        <taxon>Bacillus cereus group</taxon>
    </lineage>
</organism>
<name>SYDND_BACCN</name>
<evidence type="ECO:0000255" key="1">
    <source>
        <dbReference type="HAMAP-Rule" id="MF_00044"/>
    </source>
</evidence>
<dbReference type="EC" id="6.1.1.23" evidence="1"/>
<dbReference type="EMBL" id="CP000764">
    <property type="protein sequence ID" value="ABS23342.1"/>
    <property type="molecule type" value="Genomic_DNA"/>
</dbReference>
<dbReference type="RefSeq" id="WP_012095579.1">
    <property type="nucleotide sequence ID" value="NC_009674.1"/>
</dbReference>
<dbReference type="SMR" id="A7GT84"/>
<dbReference type="STRING" id="315749.Bcer98_3118"/>
<dbReference type="GeneID" id="33898366"/>
<dbReference type="KEGG" id="bcy:Bcer98_3118"/>
<dbReference type="eggNOG" id="COG0173">
    <property type="taxonomic scope" value="Bacteria"/>
</dbReference>
<dbReference type="HOGENOM" id="CLU_014330_3_2_9"/>
<dbReference type="OrthoDB" id="9802326at2"/>
<dbReference type="Proteomes" id="UP000002300">
    <property type="component" value="Chromosome"/>
</dbReference>
<dbReference type="GO" id="GO:0005737">
    <property type="term" value="C:cytoplasm"/>
    <property type="evidence" value="ECO:0007669"/>
    <property type="project" value="UniProtKB-SubCell"/>
</dbReference>
<dbReference type="GO" id="GO:0004815">
    <property type="term" value="F:aspartate-tRNA ligase activity"/>
    <property type="evidence" value="ECO:0007669"/>
    <property type="project" value="UniProtKB-UniRule"/>
</dbReference>
<dbReference type="GO" id="GO:0050560">
    <property type="term" value="F:aspartate-tRNA(Asn) ligase activity"/>
    <property type="evidence" value="ECO:0007669"/>
    <property type="project" value="UniProtKB-EC"/>
</dbReference>
<dbReference type="GO" id="GO:0005524">
    <property type="term" value="F:ATP binding"/>
    <property type="evidence" value="ECO:0007669"/>
    <property type="project" value="UniProtKB-UniRule"/>
</dbReference>
<dbReference type="GO" id="GO:0140096">
    <property type="term" value="F:catalytic activity, acting on a protein"/>
    <property type="evidence" value="ECO:0007669"/>
    <property type="project" value="UniProtKB-ARBA"/>
</dbReference>
<dbReference type="GO" id="GO:0003676">
    <property type="term" value="F:nucleic acid binding"/>
    <property type="evidence" value="ECO:0007669"/>
    <property type="project" value="InterPro"/>
</dbReference>
<dbReference type="GO" id="GO:0016740">
    <property type="term" value="F:transferase activity"/>
    <property type="evidence" value="ECO:0007669"/>
    <property type="project" value="UniProtKB-ARBA"/>
</dbReference>
<dbReference type="GO" id="GO:0006422">
    <property type="term" value="P:aspartyl-tRNA aminoacylation"/>
    <property type="evidence" value="ECO:0007669"/>
    <property type="project" value="UniProtKB-UniRule"/>
</dbReference>
<dbReference type="CDD" id="cd00777">
    <property type="entry name" value="AspRS_core"/>
    <property type="match status" value="1"/>
</dbReference>
<dbReference type="CDD" id="cd04317">
    <property type="entry name" value="EcAspRS_like_N"/>
    <property type="match status" value="1"/>
</dbReference>
<dbReference type="Gene3D" id="3.30.930.10">
    <property type="entry name" value="Bira Bifunctional Protein, Domain 2"/>
    <property type="match status" value="1"/>
</dbReference>
<dbReference type="Gene3D" id="3.30.1360.30">
    <property type="entry name" value="GAD-like domain"/>
    <property type="match status" value="1"/>
</dbReference>
<dbReference type="Gene3D" id="2.40.50.140">
    <property type="entry name" value="Nucleic acid-binding proteins"/>
    <property type="match status" value="1"/>
</dbReference>
<dbReference type="HAMAP" id="MF_00044">
    <property type="entry name" value="Asp_tRNA_synth_type1"/>
    <property type="match status" value="1"/>
</dbReference>
<dbReference type="InterPro" id="IPR004364">
    <property type="entry name" value="Aa-tRNA-synt_II"/>
</dbReference>
<dbReference type="InterPro" id="IPR006195">
    <property type="entry name" value="aa-tRNA-synth_II"/>
</dbReference>
<dbReference type="InterPro" id="IPR045864">
    <property type="entry name" value="aa-tRNA-synth_II/BPL/LPL"/>
</dbReference>
<dbReference type="InterPro" id="IPR004524">
    <property type="entry name" value="Asp-tRNA-ligase_1"/>
</dbReference>
<dbReference type="InterPro" id="IPR047089">
    <property type="entry name" value="Asp-tRNA-ligase_1_N"/>
</dbReference>
<dbReference type="InterPro" id="IPR002312">
    <property type="entry name" value="Asp/Asn-tRNA-synth_IIb"/>
</dbReference>
<dbReference type="InterPro" id="IPR047090">
    <property type="entry name" value="AspRS_core"/>
</dbReference>
<dbReference type="InterPro" id="IPR004115">
    <property type="entry name" value="GAD-like_sf"/>
</dbReference>
<dbReference type="InterPro" id="IPR029351">
    <property type="entry name" value="GAD_dom"/>
</dbReference>
<dbReference type="InterPro" id="IPR012340">
    <property type="entry name" value="NA-bd_OB-fold"/>
</dbReference>
<dbReference type="InterPro" id="IPR004365">
    <property type="entry name" value="NA-bd_OB_tRNA"/>
</dbReference>
<dbReference type="NCBIfam" id="TIGR00459">
    <property type="entry name" value="aspS_bact"/>
    <property type="match status" value="1"/>
</dbReference>
<dbReference type="NCBIfam" id="NF001750">
    <property type="entry name" value="PRK00476.1"/>
    <property type="match status" value="1"/>
</dbReference>
<dbReference type="PANTHER" id="PTHR22594:SF5">
    <property type="entry name" value="ASPARTATE--TRNA LIGASE, MITOCHONDRIAL"/>
    <property type="match status" value="1"/>
</dbReference>
<dbReference type="PANTHER" id="PTHR22594">
    <property type="entry name" value="ASPARTYL/LYSYL-TRNA SYNTHETASE"/>
    <property type="match status" value="1"/>
</dbReference>
<dbReference type="Pfam" id="PF02938">
    <property type="entry name" value="GAD"/>
    <property type="match status" value="1"/>
</dbReference>
<dbReference type="Pfam" id="PF00152">
    <property type="entry name" value="tRNA-synt_2"/>
    <property type="match status" value="1"/>
</dbReference>
<dbReference type="Pfam" id="PF01336">
    <property type="entry name" value="tRNA_anti-codon"/>
    <property type="match status" value="1"/>
</dbReference>
<dbReference type="PRINTS" id="PR01042">
    <property type="entry name" value="TRNASYNTHASP"/>
</dbReference>
<dbReference type="SUPFAM" id="SSF55681">
    <property type="entry name" value="Class II aaRS and biotin synthetases"/>
    <property type="match status" value="1"/>
</dbReference>
<dbReference type="SUPFAM" id="SSF55261">
    <property type="entry name" value="GAD domain-like"/>
    <property type="match status" value="1"/>
</dbReference>
<dbReference type="SUPFAM" id="SSF50249">
    <property type="entry name" value="Nucleic acid-binding proteins"/>
    <property type="match status" value="1"/>
</dbReference>
<dbReference type="PROSITE" id="PS50862">
    <property type="entry name" value="AA_TRNA_LIGASE_II"/>
    <property type="match status" value="1"/>
</dbReference>
<accession>A7GT84</accession>
<reference key="1">
    <citation type="journal article" date="2008" name="Chem. Biol. Interact.">
        <title>Extending the Bacillus cereus group genomics to putative food-borne pathogens of different toxicity.</title>
        <authorList>
            <person name="Lapidus A."/>
            <person name="Goltsman E."/>
            <person name="Auger S."/>
            <person name="Galleron N."/>
            <person name="Segurens B."/>
            <person name="Dossat C."/>
            <person name="Land M.L."/>
            <person name="Broussolle V."/>
            <person name="Brillard J."/>
            <person name="Guinebretiere M.-H."/>
            <person name="Sanchis V."/>
            <person name="Nguen-the C."/>
            <person name="Lereclus D."/>
            <person name="Richardson P."/>
            <person name="Wincker P."/>
            <person name="Weissenbach J."/>
            <person name="Ehrlich S.D."/>
            <person name="Sorokin A."/>
        </authorList>
    </citation>
    <scope>NUCLEOTIDE SEQUENCE [LARGE SCALE GENOMIC DNA]</scope>
    <source>
        <strain>DSM 22905 / CIP 110041 / 391-98 / NVH 391-98</strain>
    </source>
</reference>
<protein>
    <recommendedName>
        <fullName evidence="1">Aspartate--tRNA(Asp/Asn) ligase</fullName>
        <ecNumber evidence="1">6.1.1.23</ecNumber>
    </recommendedName>
    <alternativeName>
        <fullName evidence="1">Aspartyl-tRNA synthetase</fullName>
        <shortName evidence="1">AspRS</shortName>
    </alternativeName>
    <alternativeName>
        <fullName evidence="1">Non-discriminating aspartyl-tRNA synthetase</fullName>
        <shortName evidence="1">ND-AspRS</shortName>
    </alternativeName>
</protein>
<sequence>MAERTHACGRVTVEAIGQTVQLKGWVQKRRDLGGLIFIDLRDRTGIVQVVFSPETSKEALEVAETIRGEYVLHVEGTVVARGAGAINENMATGQIEVQATKVTVLNAAKTTPIIIADDTDASEDVRLKYRYLDLRRPVMYNTFKMRHDVTKTIRNFLDTEEFLEVETPILTKSTPEGARDYLVPSRVHDGEFYALPQSPQLFKQLLMVGGFERYYQVARCFRDEDLRADRQPEFTQIDIEASFLTQEEILDMMERMMTKVMKDVKGVEISVPFPRMTYADAMARYGSDKPDTRFEMELTDLSEFAAGCGFKVFTGAVENGGQVKAINAKGAASKYSRKDIDALTEFVKVYGAKGLAWLKVEEDGLKGPIAKFFNEEEANVIMTTLEASAGDLLLFVADKKSVVADSLGALRLRLGKELELIDENKFNFLWVTDWPLLEYDEEANRYFAAHHPFTMPFREDVELLETAPEKARAQAYDLVLNGYELGGGSLRIYERDVQEKMFKALGFTQEEAREQFGFLLEAFEYGTPPHGGIALGLDRLVMLLAGRTNLRDTIAFPKTASASCLLTDAPSPVAGAQLEELHLKLNVKE</sequence>
<gene>
    <name evidence="1" type="primary">aspS</name>
    <name type="ordered locus">Bcer98_3118</name>
</gene>
<proteinExistence type="inferred from homology"/>
<keyword id="KW-0030">Aminoacyl-tRNA synthetase</keyword>
<keyword id="KW-0067">ATP-binding</keyword>
<keyword id="KW-0963">Cytoplasm</keyword>
<keyword id="KW-0436">Ligase</keyword>
<keyword id="KW-0547">Nucleotide-binding</keyword>
<keyword id="KW-0648">Protein biosynthesis</keyword>
<feature type="chain" id="PRO_1000074690" description="Aspartate--tRNA(Asp/Asn) ligase">
    <location>
        <begin position="1"/>
        <end position="589"/>
    </location>
</feature>
<feature type="region of interest" description="Aspartate" evidence="1">
    <location>
        <begin position="200"/>
        <end position="203"/>
    </location>
</feature>
<feature type="binding site" evidence="1">
    <location>
        <position position="176"/>
    </location>
    <ligand>
        <name>L-aspartate</name>
        <dbReference type="ChEBI" id="CHEBI:29991"/>
    </ligand>
</feature>
<feature type="binding site" evidence="1">
    <location>
        <begin position="222"/>
        <end position="224"/>
    </location>
    <ligand>
        <name>ATP</name>
        <dbReference type="ChEBI" id="CHEBI:30616"/>
    </ligand>
</feature>
<feature type="binding site" evidence="1">
    <location>
        <position position="222"/>
    </location>
    <ligand>
        <name>L-aspartate</name>
        <dbReference type="ChEBI" id="CHEBI:29991"/>
    </ligand>
</feature>
<feature type="binding site" evidence="1">
    <location>
        <position position="231"/>
    </location>
    <ligand>
        <name>ATP</name>
        <dbReference type="ChEBI" id="CHEBI:30616"/>
    </ligand>
</feature>
<feature type="binding site" evidence="1">
    <location>
        <position position="450"/>
    </location>
    <ligand>
        <name>L-aspartate</name>
        <dbReference type="ChEBI" id="CHEBI:29991"/>
    </ligand>
</feature>
<feature type="binding site" evidence="1">
    <location>
        <position position="484"/>
    </location>
    <ligand>
        <name>ATP</name>
        <dbReference type="ChEBI" id="CHEBI:30616"/>
    </ligand>
</feature>
<feature type="binding site" evidence="1">
    <location>
        <position position="491"/>
    </location>
    <ligand>
        <name>L-aspartate</name>
        <dbReference type="ChEBI" id="CHEBI:29991"/>
    </ligand>
</feature>
<feature type="binding site" evidence="1">
    <location>
        <begin position="536"/>
        <end position="539"/>
    </location>
    <ligand>
        <name>ATP</name>
        <dbReference type="ChEBI" id="CHEBI:30616"/>
    </ligand>
</feature>
<feature type="site" description="Important for tRNA non-discrimination" evidence="1">
    <location>
        <position position="84"/>
    </location>
</feature>